<comment type="function">
    <text evidence="1">Together with LptD, is involved in the assembly of lipopolysaccharide (LPS) at the surface of the outer membrane. Required for the proper assembly of LptD. Binds LPS and may serve as the LPS recognition site at the outer membrane.</text>
</comment>
<comment type="subunit">
    <text evidence="1">Component of the lipopolysaccharide transport and assembly complex. Interacts with LptD.</text>
</comment>
<comment type="subcellular location">
    <subcellularLocation>
        <location evidence="1">Cell outer membrane</location>
        <topology evidence="1">Lipid-anchor</topology>
    </subcellularLocation>
</comment>
<comment type="similarity">
    <text evidence="1">Belongs to the LptE lipoprotein family.</text>
</comment>
<dbReference type="EMBL" id="AM286415">
    <property type="protein sequence ID" value="CAL13036.1"/>
    <property type="molecule type" value="Genomic_DNA"/>
</dbReference>
<dbReference type="RefSeq" id="WP_011816836.1">
    <property type="nucleotide sequence ID" value="NC_008800.1"/>
</dbReference>
<dbReference type="RefSeq" id="YP_001007186.1">
    <property type="nucleotide sequence ID" value="NC_008800.1"/>
</dbReference>
<dbReference type="SMR" id="A1JQ26"/>
<dbReference type="KEGG" id="yen:YE2997"/>
<dbReference type="PATRIC" id="fig|393305.7.peg.3192"/>
<dbReference type="eggNOG" id="COG2980">
    <property type="taxonomic scope" value="Bacteria"/>
</dbReference>
<dbReference type="HOGENOM" id="CLU_103309_1_1_6"/>
<dbReference type="OrthoDB" id="5801564at2"/>
<dbReference type="Proteomes" id="UP000000642">
    <property type="component" value="Chromosome"/>
</dbReference>
<dbReference type="GO" id="GO:0009279">
    <property type="term" value="C:cell outer membrane"/>
    <property type="evidence" value="ECO:0007669"/>
    <property type="project" value="UniProtKB-SubCell"/>
</dbReference>
<dbReference type="GO" id="GO:1990351">
    <property type="term" value="C:transporter complex"/>
    <property type="evidence" value="ECO:0007669"/>
    <property type="project" value="TreeGrafter"/>
</dbReference>
<dbReference type="GO" id="GO:0001530">
    <property type="term" value="F:lipopolysaccharide binding"/>
    <property type="evidence" value="ECO:0007669"/>
    <property type="project" value="TreeGrafter"/>
</dbReference>
<dbReference type="GO" id="GO:0043165">
    <property type="term" value="P:Gram-negative-bacterium-type cell outer membrane assembly"/>
    <property type="evidence" value="ECO:0007669"/>
    <property type="project" value="UniProtKB-UniRule"/>
</dbReference>
<dbReference type="GO" id="GO:0015920">
    <property type="term" value="P:lipopolysaccharide transport"/>
    <property type="evidence" value="ECO:0007669"/>
    <property type="project" value="TreeGrafter"/>
</dbReference>
<dbReference type="Gene3D" id="3.30.160.150">
    <property type="entry name" value="Lipoprotein like domain"/>
    <property type="match status" value="1"/>
</dbReference>
<dbReference type="HAMAP" id="MF_01186">
    <property type="entry name" value="LPS_assembly_LptE"/>
    <property type="match status" value="1"/>
</dbReference>
<dbReference type="InterPro" id="IPR007485">
    <property type="entry name" value="LPS_assembly_LptE"/>
</dbReference>
<dbReference type="NCBIfam" id="NF008062">
    <property type="entry name" value="PRK10796.1"/>
    <property type="match status" value="1"/>
</dbReference>
<dbReference type="PANTHER" id="PTHR38098">
    <property type="entry name" value="LPS-ASSEMBLY LIPOPROTEIN LPTE"/>
    <property type="match status" value="1"/>
</dbReference>
<dbReference type="PANTHER" id="PTHR38098:SF1">
    <property type="entry name" value="LPS-ASSEMBLY LIPOPROTEIN LPTE"/>
    <property type="match status" value="1"/>
</dbReference>
<dbReference type="Pfam" id="PF04390">
    <property type="entry name" value="LptE"/>
    <property type="match status" value="1"/>
</dbReference>
<dbReference type="PROSITE" id="PS51257">
    <property type="entry name" value="PROKAR_LIPOPROTEIN"/>
    <property type="match status" value="1"/>
</dbReference>
<feature type="signal peptide" evidence="1">
    <location>
        <begin position="1"/>
        <end position="19"/>
    </location>
</feature>
<feature type="chain" id="PRO_1000065827" description="LPS-assembly lipoprotein LptE">
    <location>
        <begin position="20"/>
        <end position="207"/>
    </location>
</feature>
<feature type="lipid moiety-binding region" description="N-palmitoyl cysteine" evidence="1">
    <location>
        <position position="20"/>
    </location>
</feature>
<feature type="lipid moiety-binding region" description="S-diacylglycerol cysteine" evidence="1">
    <location>
        <position position="20"/>
    </location>
</feature>
<evidence type="ECO:0000255" key="1">
    <source>
        <dbReference type="HAMAP-Rule" id="MF_01186"/>
    </source>
</evidence>
<organism>
    <name type="scientific">Yersinia enterocolitica serotype O:8 / biotype 1B (strain NCTC 13174 / 8081)</name>
    <dbReference type="NCBI Taxonomy" id="393305"/>
    <lineage>
        <taxon>Bacteria</taxon>
        <taxon>Pseudomonadati</taxon>
        <taxon>Pseudomonadota</taxon>
        <taxon>Gammaproteobacteria</taxon>
        <taxon>Enterobacterales</taxon>
        <taxon>Yersiniaceae</taxon>
        <taxon>Yersinia</taxon>
    </lineage>
</organism>
<keyword id="KW-0998">Cell outer membrane</keyword>
<keyword id="KW-0449">Lipoprotein</keyword>
<keyword id="KW-0472">Membrane</keyword>
<keyword id="KW-0564">Palmitate</keyword>
<keyword id="KW-0732">Signal</keyword>
<gene>
    <name evidence="1" type="primary">lptE</name>
    <name type="synonym">rlpB</name>
    <name type="ordered locus">YE2997</name>
</gene>
<reference key="1">
    <citation type="journal article" date="2006" name="PLoS Genet.">
        <title>The complete genome sequence and comparative genome analysis of the high pathogenicity Yersinia enterocolitica strain 8081.</title>
        <authorList>
            <person name="Thomson N.R."/>
            <person name="Howard S."/>
            <person name="Wren B.W."/>
            <person name="Holden M.T.G."/>
            <person name="Crossman L."/>
            <person name="Challis G.L."/>
            <person name="Churcher C."/>
            <person name="Mungall K."/>
            <person name="Brooks K."/>
            <person name="Chillingworth T."/>
            <person name="Feltwell T."/>
            <person name="Abdellah Z."/>
            <person name="Hauser H."/>
            <person name="Jagels K."/>
            <person name="Maddison M."/>
            <person name="Moule S."/>
            <person name="Sanders M."/>
            <person name="Whitehead S."/>
            <person name="Quail M.A."/>
            <person name="Dougan G."/>
            <person name="Parkhill J."/>
            <person name="Prentice M.B."/>
        </authorList>
    </citation>
    <scope>NUCLEOTIDE SEQUENCE [LARGE SCALE GENOMIC DNA]</scope>
    <source>
        <strain>NCTC 13174 / 8081</strain>
    </source>
</reference>
<sequence>MRHRILMLLLGLAVLVTAGCGFNLRGTTQVPPELQKLLLESSDPYGPLTRAIRQQLRLSNVTIVDDPMRKDLPALRIIGSSENQDTVSIFRNGVTAEYQLVLHVQAQVLIPGHDIYPIRVNIFRTFFDNPLTALAKEAEAEVLRQEMRDQAAQQLVRKLLVVHAAEIKNAQENGDTLTSSKRATGAAKMADVEEINIGKPAVSTPAQ</sequence>
<accession>A1JQ26</accession>
<name>LPTE_YERE8</name>
<protein>
    <recommendedName>
        <fullName evidence="1">LPS-assembly lipoprotein LptE</fullName>
    </recommendedName>
</protein>
<proteinExistence type="inferred from homology"/>